<gene>
    <name evidence="1" type="primary">pyrD</name>
    <name type="ordered locus">ECA2538</name>
</gene>
<feature type="chain" id="PRO_0000148440" description="Dihydroorotate dehydrogenase (quinone)">
    <location>
        <begin position="1"/>
        <end position="336"/>
    </location>
</feature>
<feature type="active site" description="Nucleophile" evidence="1">
    <location>
        <position position="175"/>
    </location>
</feature>
<feature type="binding site" evidence="1">
    <location>
        <begin position="62"/>
        <end position="66"/>
    </location>
    <ligand>
        <name>FMN</name>
        <dbReference type="ChEBI" id="CHEBI:58210"/>
    </ligand>
</feature>
<feature type="binding site" evidence="1">
    <location>
        <position position="66"/>
    </location>
    <ligand>
        <name>substrate</name>
    </ligand>
</feature>
<feature type="binding site" evidence="1">
    <location>
        <position position="86"/>
    </location>
    <ligand>
        <name>FMN</name>
        <dbReference type="ChEBI" id="CHEBI:58210"/>
    </ligand>
</feature>
<feature type="binding site" evidence="1">
    <location>
        <begin position="111"/>
        <end position="115"/>
    </location>
    <ligand>
        <name>substrate</name>
    </ligand>
</feature>
<feature type="binding site" evidence="1">
    <location>
        <position position="139"/>
    </location>
    <ligand>
        <name>FMN</name>
        <dbReference type="ChEBI" id="CHEBI:58210"/>
    </ligand>
</feature>
<feature type="binding site" evidence="1">
    <location>
        <position position="172"/>
    </location>
    <ligand>
        <name>FMN</name>
        <dbReference type="ChEBI" id="CHEBI:58210"/>
    </ligand>
</feature>
<feature type="binding site" evidence="1">
    <location>
        <position position="172"/>
    </location>
    <ligand>
        <name>substrate</name>
    </ligand>
</feature>
<feature type="binding site" evidence="1">
    <location>
        <position position="177"/>
    </location>
    <ligand>
        <name>substrate</name>
    </ligand>
</feature>
<feature type="binding site" evidence="1">
    <location>
        <position position="217"/>
    </location>
    <ligand>
        <name>FMN</name>
        <dbReference type="ChEBI" id="CHEBI:58210"/>
    </ligand>
</feature>
<feature type="binding site" evidence="1">
    <location>
        <position position="245"/>
    </location>
    <ligand>
        <name>FMN</name>
        <dbReference type="ChEBI" id="CHEBI:58210"/>
    </ligand>
</feature>
<feature type="binding site" evidence="1">
    <location>
        <begin position="246"/>
        <end position="247"/>
    </location>
    <ligand>
        <name>substrate</name>
    </ligand>
</feature>
<feature type="binding site" evidence="1">
    <location>
        <position position="268"/>
    </location>
    <ligand>
        <name>FMN</name>
        <dbReference type="ChEBI" id="CHEBI:58210"/>
    </ligand>
</feature>
<feature type="binding site" evidence="1">
    <location>
        <position position="297"/>
    </location>
    <ligand>
        <name>FMN</name>
        <dbReference type="ChEBI" id="CHEBI:58210"/>
    </ligand>
</feature>
<feature type="binding site" evidence="1">
    <location>
        <begin position="318"/>
        <end position="319"/>
    </location>
    <ligand>
        <name>FMN</name>
        <dbReference type="ChEBI" id="CHEBI:58210"/>
    </ligand>
</feature>
<evidence type="ECO:0000255" key="1">
    <source>
        <dbReference type="HAMAP-Rule" id="MF_00225"/>
    </source>
</evidence>
<sequence length="336" mass="36899">MFYPVIKKALFQLDPERAHELTFQQLRRITNTPFEFLVRQSVPTKPVTCMGLSFKNPLGLAAGLDKDGECIDALGAMGFGFIEVGTVTPRPQSGNDKPRLFRVVEAEGLINRMGFNNKGVDYLVENVKKTRFGGVLGINIGKNKDTPVEQGKDDYLICMDKVYPHAGYIAINISSPNTPGLRSLQYGEALDDLLLAIKNKQTELKEKHQKYVPVAVKIAPDLSEEELIQIADSLVRYNIDGVIATNTTLDRKLIQGLNHCGQTGGLSGRPLQTSSTEIIRRLSQELAGRLPIIGVGGIDSLVAAREKMDAGASLVQIYSGFIFHGPRLIKDIVTHI</sequence>
<protein>
    <recommendedName>
        <fullName evidence="1">Dihydroorotate dehydrogenase (quinone)</fullName>
        <ecNumber evidence="1">1.3.5.2</ecNumber>
    </recommendedName>
    <alternativeName>
        <fullName evidence="1">DHOdehase</fullName>
        <shortName evidence="1">DHOD</shortName>
        <shortName evidence="1">DHODase</shortName>
    </alternativeName>
    <alternativeName>
        <fullName evidence="1">Dihydroorotate oxidase</fullName>
    </alternativeName>
</protein>
<comment type="function">
    <text evidence="1">Catalyzes the conversion of dihydroorotate to orotate with quinone as electron acceptor.</text>
</comment>
<comment type="catalytic activity">
    <reaction evidence="1">
        <text>(S)-dihydroorotate + a quinone = orotate + a quinol</text>
        <dbReference type="Rhea" id="RHEA:30187"/>
        <dbReference type="ChEBI" id="CHEBI:24646"/>
        <dbReference type="ChEBI" id="CHEBI:30839"/>
        <dbReference type="ChEBI" id="CHEBI:30864"/>
        <dbReference type="ChEBI" id="CHEBI:132124"/>
        <dbReference type="EC" id="1.3.5.2"/>
    </reaction>
</comment>
<comment type="cofactor">
    <cofactor evidence="1">
        <name>FMN</name>
        <dbReference type="ChEBI" id="CHEBI:58210"/>
    </cofactor>
    <text evidence="1">Binds 1 FMN per subunit.</text>
</comment>
<comment type="pathway">
    <text evidence="1">Pyrimidine metabolism; UMP biosynthesis via de novo pathway; orotate from (S)-dihydroorotate (quinone route): step 1/1.</text>
</comment>
<comment type="subunit">
    <text evidence="1">Monomer.</text>
</comment>
<comment type="subcellular location">
    <subcellularLocation>
        <location evidence="1">Cell membrane</location>
        <topology evidence="1">Peripheral membrane protein</topology>
    </subcellularLocation>
</comment>
<comment type="similarity">
    <text evidence="1">Belongs to the dihydroorotate dehydrogenase family. Type 2 subfamily.</text>
</comment>
<reference key="1">
    <citation type="journal article" date="2004" name="Proc. Natl. Acad. Sci. U.S.A.">
        <title>Genome sequence of the enterobacterial phytopathogen Erwinia carotovora subsp. atroseptica and characterization of virulence factors.</title>
        <authorList>
            <person name="Bell K.S."/>
            <person name="Sebaihia M."/>
            <person name="Pritchard L."/>
            <person name="Holden M.T.G."/>
            <person name="Hyman L.J."/>
            <person name="Holeva M.C."/>
            <person name="Thomson N.R."/>
            <person name="Bentley S.D."/>
            <person name="Churcher L.J.C."/>
            <person name="Mungall K."/>
            <person name="Atkin R."/>
            <person name="Bason N."/>
            <person name="Brooks K."/>
            <person name="Chillingworth T."/>
            <person name="Clark K."/>
            <person name="Doggett J."/>
            <person name="Fraser A."/>
            <person name="Hance Z."/>
            <person name="Hauser H."/>
            <person name="Jagels K."/>
            <person name="Moule S."/>
            <person name="Norbertczak H."/>
            <person name="Ormond D."/>
            <person name="Price C."/>
            <person name="Quail M.A."/>
            <person name="Sanders M."/>
            <person name="Walker D."/>
            <person name="Whitehead S."/>
            <person name="Salmond G.P.C."/>
            <person name="Birch P.R.J."/>
            <person name="Parkhill J."/>
            <person name="Toth I.K."/>
        </authorList>
    </citation>
    <scope>NUCLEOTIDE SEQUENCE [LARGE SCALE GENOMIC DNA]</scope>
    <source>
        <strain>SCRI 1043 / ATCC BAA-672</strain>
    </source>
</reference>
<organism>
    <name type="scientific">Pectobacterium atrosepticum (strain SCRI 1043 / ATCC BAA-672)</name>
    <name type="common">Erwinia carotovora subsp. atroseptica</name>
    <dbReference type="NCBI Taxonomy" id="218491"/>
    <lineage>
        <taxon>Bacteria</taxon>
        <taxon>Pseudomonadati</taxon>
        <taxon>Pseudomonadota</taxon>
        <taxon>Gammaproteobacteria</taxon>
        <taxon>Enterobacterales</taxon>
        <taxon>Pectobacteriaceae</taxon>
        <taxon>Pectobacterium</taxon>
    </lineage>
</organism>
<keyword id="KW-1003">Cell membrane</keyword>
<keyword id="KW-0285">Flavoprotein</keyword>
<keyword id="KW-0288">FMN</keyword>
<keyword id="KW-0472">Membrane</keyword>
<keyword id="KW-0560">Oxidoreductase</keyword>
<keyword id="KW-0665">Pyrimidine biosynthesis</keyword>
<keyword id="KW-1185">Reference proteome</keyword>
<proteinExistence type="inferred from homology"/>
<accession>Q6D456</accession>
<dbReference type="EC" id="1.3.5.2" evidence="1"/>
<dbReference type="EMBL" id="BX950851">
    <property type="protein sequence ID" value="CAG75437.1"/>
    <property type="molecule type" value="Genomic_DNA"/>
</dbReference>
<dbReference type="RefSeq" id="WP_011094083.1">
    <property type="nucleotide sequence ID" value="NC_004547.2"/>
</dbReference>
<dbReference type="SMR" id="Q6D456"/>
<dbReference type="STRING" id="218491.ECA2538"/>
<dbReference type="GeneID" id="57208765"/>
<dbReference type="KEGG" id="eca:ECA2538"/>
<dbReference type="PATRIC" id="fig|218491.5.peg.2570"/>
<dbReference type="eggNOG" id="COG0167">
    <property type="taxonomic scope" value="Bacteria"/>
</dbReference>
<dbReference type="HOGENOM" id="CLU_013640_2_0_6"/>
<dbReference type="OrthoDB" id="9802377at2"/>
<dbReference type="UniPathway" id="UPA00070">
    <property type="reaction ID" value="UER00946"/>
</dbReference>
<dbReference type="Proteomes" id="UP000007966">
    <property type="component" value="Chromosome"/>
</dbReference>
<dbReference type="GO" id="GO:0005737">
    <property type="term" value="C:cytoplasm"/>
    <property type="evidence" value="ECO:0007669"/>
    <property type="project" value="InterPro"/>
</dbReference>
<dbReference type="GO" id="GO:0005886">
    <property type="term" value="C:plasma membrane"/>
    <property type="evidence" value="ECO:0007669"/>
    <property type="project" value="UniProtKB-SubCell"/>
</dbReference>
<dbReference type="GO" id="GO:0106430">
    <property type="term" value="F:dihydroorotate dehydrogenase (quinone) activity"/>
    <property type="evidence" value="ECO:0007669"/>
    <property type="project" value="UniProtKB-EC"/>
</dbReference>
<dbReference type="GO" id="GO:0006207">
    <property type="term" value="P:'de novo' pyrimidine nucleobase biosynthetic process"/>
    <property type="evidence" value="ECO:0007669"/>
    <property type="project" value="InterPro"/>
</dbReference>
<dbReference type="GO" id="GO:0044205">
    <property type="term" value="P:'de novo' UMP biosynthetic process"/>
    <property type="evidence" value="ECO:0007669"/>
    <property type="project" value="UniProtKB-UniRule"/>
</dbReference>
<dbReference type="CDD" id="cd04738">
    <property type="entry name" value="DHOD_2_like"/>
    <property type="match status" value="1"/>
</dbReference>
<dbReference type="FunFam" id="3.20.20.70:FF:000028">
    <property type="entry name" value="Dihydroorotate dehydrogenase (quinone)"/>
    <property type="match status" value="1"/>
</dbReference>
<dbReference type="Gene3D" id="3.20.20.70">
    <property type="entry name" value="Aldolase class I"/>
    <property type="match status" value="1"/>
</dbReference>
<dbReference type="HAMAP" id="MF_00225">
    <property type="entry name" value="DHO_dh_type2"/>
    <property type="match status" value="1"/>
</dbReference>
<dbReference type="InterPro" id="IPR013785">
    <property type="entry name" value="Aldolase_TIM"/>
</dbReference>
<dbReference type="InterPro" id="IPR050074">
    <property type="entry name" value="DHO_dehydrogenase"/>
</dbReference>
<dbReference type="InterPro" id="IPR012135">
    <property type="entry name" value="Dihydroorotate_DH_1_2"/>
</dbReference>
<dbReference type="InterPro" id="IPR005719">
    <property type="entry name" value="Dihydroorotate_DH_2"/>
</dbReference>
<dbReference type="InterPro" id="IPR005720">
    <property type="entry name" value="Dihydroorotate_DH_cat"/>
</dbReference>
<dbReference type="InterPro" id="IPR001295">
    <property type="entry name" value="Dihydroorotate_DH_CS"/>
</dbReference>
<dbReference type="NCBIfam" id="NF003644">
    <property type="entry name" value="PRK05286.1-1"/>
    <property type="match status" value="1"/>
</dbReference>
<dbReference type="NCBIfam" id="NF003645">
    <property type="entry name" value="PRK05286.1-2"/>
    <property type="match status" value="1"/>
</dbReference>
<dbReference type="NCBIfam" id="NF003646">
    <property type="entry name" value="PRK05286.1-4"/>
    <property type="match status" value="1"/>
</dbReference>
<dbReference type="NCBIfam" id="NF003652">
    <property type="entry name" value="PRK05286.2-5"/>
    <property type="match status" value="1"/>
</dbReference>
<dbReference type="NCBIfam" id="TIGR01036">
    <property type="entry name" value="pyrD_sub2"/>
    <property type="match status" value="1"/>
</dbReference>
<dbReference type="PANTHER" id="PTHR48109:SF4">
    <property type="entry name" value="DIHYDROOROTATE DEHYDROGENASE (QUINONE), MITOCHONDRIAL"/>
    <property type="match status" value="1"/>
</dbReference>
<dbReference type="PANTHER" id="PTHR48109">
    <property type="entry name" value="DIHYDROOROTATE DEHYDROGENASE (QUINONE), MITOCHONDRIAL-RELATED"/>
    <property type="match status" value="1"/>
</dbReference>
<dbReference type="Pfam" id="PF01180">
    <property type="entry name" value="DHO_dh"/>
    <property type="match status" value="1"/>
</dbReference>
<dbReference type="PIRSF" id="PIRSF000164">
    <property type="entry name" value="DHO_oxidase"/>
    <property type="match status" value="1"/>
</dbReference>
<dbReference type="SUPFAM" id="SSF51395">
    <property type="entry name" value="FMN-linked oxidoreductases"/>
    <property type="match status" value="1"/>
</dbReference>
<dbReference type="PROSITE" id="PS00911">
    <property type="entry name" value="DHODEHASE_1"/>
    <property type="match status" value="1"/>
</dbReference>
<dbReference type="PROSITE" id="PS00912">
    <property type="entry name" value="DHODEHASE_2"/>
    <property type="match status" value="1"/>
</dbReference>
<name>PYRD_PECAS</name>